<comment type="function">
    <text evidence="1">F(1)F(0) ATP synthase produces ATP from ADP in the presence of a proton or sodium gradient. F-type ATPases consist of two structural domains, F(1) containing the extramembraneous catalytic core and F(0) containing the membrane proton channel, linked together by a central stalk and a peripheral stalk. During catalysis, ATP synthesis in the catalytic domain of F(1) is coupled via a rotary mechanism of the central stalk subunits to proton translocation.</text>
</comment>
<comment type="function">
    <text evidence="1">Key component of the F(0) channel; it plays a direct role in translocation across the membrane. A homomeric c-ring of between 10-14 subunits forms the central stalk rotor element with the F(1) delta and epsilon subunits.</text>
</comment>
<comment type="subunit">
    <text evidence="1">F-type ATPases have 2 components, F(1) - the catalytic core - and F(0) - the membrane proton channel. F(1) has five subunits: alpha(3), beta(3), gamma(1), delta(1), epsilon(1). F(0) has three main subunits: a(1), b(2) and c(10-14). The alpha and beta chains form an alternating ring which encloses part of the gamma chain. F(1) is attached to F(0) by a central stalk formed by the gamma and epsilon chains, while a peripheral stalk is formed by the delta and b chains.</text>
</comment>
<comment type="subcellular location">
    <subcellularLocation>
        <location evidence="1">Cell inner membrane</location>
        <topology evidence="1">Multi-pass membrane protein</topology>
    </subcellularLocation>
</comment>
<comment type="similarity">
    <text evidence="1">Belongs to the ATPase C chain family.</text>
</comment>
<feature type="chain" id="PRO_1000184457" description="ATP synthase subunit c">
    <location>
        <begin position="1"/>
        <end position="79"/>
    </location>
</feature>
<feature type="transmembrane region" description="Helical" evidence="1">
    <location>
        <begin position="11"/>
        <end position="31"/>
    </location>
</feature>
<feature type="transmembrane region" description="Helical" evidence="1">
    <location>
        <begin position="53"/>
        <end position="73"/>
    </location>
</feature>
<feature type="site" description="Reversibly protonated during proton transport" evidence="1">
    <location>
        <position position="61"/>
    </location>
</feature>
<accession>B5QVD7</accession>
<name>ATPL_SALEP</name>
<proteinExistence type="inferred from homology"/>
<evidence type="ECO:0000255" key="1">
    <source>
        <dbReference type="HAMAP-Rule" id="MF_01396"/>
    </source>
</evidence>
<sequence>MENLNMDLLYMAAAVMMGLAAIGAAIGIGILGGKFLEGAARQPDLIPLLRTQFFIVMGLVDAIPMIAVGLGLYVMFAVA</sequence>
<dbReference type="EMBL" id="AM933172">
    <property type="protein sequence ID" value="CAR35260.1"/>
    <property type="molecule type" value="Genomic_DNA"/>
</dbReference>
<dbReference type="RefSeq" id="WP_000429386.1">
    <property type="nucleotide sequence ID" value="NC_011294.1"/>
</dbReference>
<dbReference type="SMR" id="B5QVD7"/>
<dbReference type="GeneID" id="98390858"/>
<dbReference type="KEGG" id="set:SEN3684"/>
<dbReference type="HOGENOM" id="CLU_148047_1_0_6"/>
<dbReference type="Proteomes" id="UP000000613">
    <property type="component" value="Chromosome"/>
</dbReference>
<dbReference type="GO" id="GO:0005886">
    <property type="term" value="C:plasma membrane"/>
    <property type="evidence" value="ECO:0007669"/>
    <property type="project" value="UniProtKB-SubCell"/>
</dbReference>
<dbReference type="GO" id="GO:0045259">
    <property type="term" value="C:proton-transporting ATP synthase complex"/>
    <property type="evidence" value="ECO:0007669"/>
    <property type="project" value="UniProtKB-KW"/>
</dbReference>
<dbReference type="GO" id="GO:0033177">
    <property type="term" value="C:proton-transporting two-sector ATPase complex, proton-transporting domain"/>
    <property type="evidence" value="ECO:0007669"/>
    <property type="project" value="InterPro"/>
</dbReference>
<dbReference type="GO" id="GO:0008289">
    <property type="term" value="F:lipid binding"/>
    <property type="evidence" value="ECO:0007669"/>
    <property type="project" value="UniProtKB-KW"/>
</dbReference>
<dbReference type="GO" id="GO:0046933">
    <property type="term" value="F:proton-transporting ATP synthase activity, rotational mechanism"/>
    <property type="evidence" value="ECO:0007669"/>
    <property type="project" value="UniProtKB-UniRule"/>
</dbReference>
<dbReference type="CDD" id="cd18185">
    <property type="entry name" value="ATP-synt_Fo_c_ATPE"/>
    <property type="match status" value="1"/>
</dbReference>
<dbReference type="FunFam" id="1.20.20.10:FF:000002">
    <property type="entry name" value="ATP synthase subunit c"/>
    <property type="match status" value="1"/>
</dbReference>
<dbReference type="Gene3D" id="1.20.20.10">
    <property type="entry name" value="F1F0 ATP synthase subunit C"/>
    <property type="match status" value="1"/>
</dbReference>
<dbReference type="HAMAP" id="MF_01396">
    <property type="entry name" value="ATP_synth_c_bact"/>
    <property type="match status" value="1"/>
</dbReference>
<dbReference type="InterPro" id="IPR005953">
    <property type="entry name" value="ATP_synth_csu_bac/chlpt"/>
</dbReference>
<dbReference type="InterPro" id="IPR000454">
    <property type="entry name" value="ATP_synth_F0_csu"/>
</dbReference>
<dbReference type="InterPro" id="IPR020537">
    <property type="entry name" value="ATP_synth_F0_csu_DDCD_BS"/>
</dbReference>
<dbReference type="InterPro" id="IPR038662">
    <property type="entry name" value="ATP_synth_F0_csu_sf"/>
</dbReference>
<dbReference type="InterPro" id="IPR002379">
    <property type="entry name" value="ATPase_proteolipid_c-like_dom"/>
</dbReference>
<dbReference type="InterPro" id="IPR035921">
    <property type="entry name" value="F/V-ATP_Csub_sf"/>
</dbReference>
<dbReference type="NCBIfam" id="TIGR01260">
    <property type="entry name" value="ATP_synt_c"/>
    <property type="match status" value="1"/>
</dbReference>
<dbReference type="NCBIfam" id="NF005363">
    <property type="entry name" value="PRK06876.1"/>
    <property type="match status" value="1"/>
</dbReference>
<dbReference type="Pfam" id="PF00137">
    <property type="entry name" value="ATP-synt_C"/>
    <property type="match status" value="1"/>
</dbReference>
<dbReference type="PRINTS" id="PR00124">
    <property type="entry name" value="ATPASEC"/>
</dbReference>
<dbReference type="SUPFAM" id="SSF81333">
    <property type="entry name" value="F1F0 ATP synthase subunit C"/>
    <property type="match status" value="1"/>
</dbReference>
<dbReference type="PROSITE" id="PS00605">
    <property type="entry name" value="ATPASE_C"/>
    <property type="match status" value="1"/>
</dbReference>
<gene>
    <name evidence="1" type="primary">atpE</name>
    <name type="ordered locus">SEN3684</name>
</gene>
<protein>
    <recommendedName>
        <fullName evidence="1">ATP synthase subunit c</fullName>
    </recommendedName>
    <alternativeName>
        <fullName evidence="1">ATP synthase F(0) sector subunit c</fullName>
    </alternativeName>
    <alternativeName>
        <fullName evidence="1">F-type ATPase subunit c</fullName>
        <shortName evidence="1">F-ATPase subunit c</shortName>
    </alternativeName>
    <alternativeName>
        <fullName evidence="1">Lipid-binding protein</fullName>
    </alternativeName>
</protein>
<organism>
    <name type="scientific">Salmonella enteritidis PT4 (strain P125109)</name>
    <dbReference type="NCBI Taxonomy" id="550537"/>
    <lineage>
        <taxon>Bacteria</taxon>
        <taxon>Pseudomonadati</taxon>
        <taxon>Pseudomonadota</taxon>
        <taxon>Gammaproteobacteria</taxon>
        <taxon>Enterobacterales</taxon>
        <taxon>Enterobacteriaceae</taxon>
        <taxon>Salmonella</taxon>
    </lineage>
</organism>
<reference key="1">
    <citation type="journal article" date="2008" name="Genome Res.">
        <title>Comparative genome analysis of Salmonella enteritidis PT4 and Salmonella gallinarum 287/91 provides insights into evolutionary and host adaptation pathways.</title>
        <authorList>
            <person name="Thomson N.R."/>
            <person name="Clayton D.J."/>
            <person name="Windhorst D."/>
            <person name="Vernikos G."/>
            <person name="Davidson S."/>
            <person name="Churcher C."/>
            <person name="Quail M.A."/>
            <person name="Stevens M."/>
            <person name="Jones M.A."/>
            <person name="Watson M."/>
            <person name="Barron A."/>
            <person name="Layton A."/>
            <person name="Pickard D."/>
            <person name="Kingsley R.A."/>
            <person name="Bignell A."/>
            <person name="Clark L."/>
            <person name="Harris B."/>
            <person name="Ormond D."/>
            <person name="Abdellah Z."/>
            <person name="Brooks K."/>
            <person name="Cherevach I."/>
            <person name="Chillingworth T."/>
            <person name="Woodward J."/>
            <person name="Norberczak H."/>
            <person name="Lord A."/>
            <person name="Arrowsmith C."/>
            <person name="Jagels K."/>
            <person name="Moule S."/>
            <person name="Mungall K."/>
            <person name="Saunders M."/>
            <person name="Whitehead S."/>
            <person name="Chabalgoity J.A."/>
            <person name="Maskell D."/>
            <person name="Humphreys T."/>
            <person name="Roberts M."/>
            <person name="Barrow P.A."/>
            <person name="Dougan G."/>
            <person name="Parkhill J."/>
        </authorList>
    </citation>
    <scope>NUCLEOTIDE SEQUENCE [LARGE SCALE GENOMIC DNA]</scope>
    <source>
        <strain>P125109</strain>
    </source>
</reference>
<keyword id="KW-0066">ATP synthesis</keyword>
<keyword id="KW-0997">Cell inner membrane</keyword>
<keyword id="KW-1003">Cell membrane</keyword>
<keyword id="KW-0138">CF(0)</keyword>
<keyword id="KW-0375">Hydrogen ion transport</keyword>
<keyword id="KW-0406">Ion transport</keyword>
<keyword id="KW-0446">Lipid-binding</keyword>
<keyword id="KW-0472">Membrane</keyword>
<keyword id="KW-0812">Transmembrane</keyword>
<keyword id="KW-1133">Transmembrane helix</keyword>
<keyword id="KW-0813">Transport</keyword>